<protein>
    <recommendedName>
        <fullName>NADP-dependent malic enzyme, chloroplastic</fullName>
        <shortName>NADP-ME</shortName>
        <ecNumber>1.1.1.40</ecNumber>
    </recommendedName>
</protein>
<dbReference type="EC" id="1.1.1.40"/>
<dbReference type="EMBL" id="X57142">
    <property type="protein sequence ID" value="CAA40421.1"/>
    <property type="molecule type" value="mRNA"/>
</dbReference>
<dbReference type="EMBL" id="M59416">
    <property type="protein sequence ID" value="AAB19243.1"/>
    <property type="molecule type" value="mRNA"/>
</dbReference>
<dbReference type="PIR" id="S12893">
    <property type="entry name" value="S12893"/>
</dbReference>
<dbReference type="SMR" id="P22178"/>
<dbReference type="UniPathway" id="UPA00322"/>
<dbReference type="GO" id="GO:0009507">
    <property type="term" value="C:chloroplast"/>
    <property type="evidence" value="ECO:0007669"/>
    <property type="project" value="UniProtKB-SubCell"/>
</dbReference>
<dbReference type="GO" id="GO:0004473">
    <property type="term" value="F:malate dehydrogenase (decarboxylating) (NADP+) activity"/>
    <property type="evidence" value="ECO:0007669"/>
    <property type="project" value="UniProtKB-EC"/>
</dbReference>
<dbReference type="GO" id="GO:0046872">
    <property type="term" value="F:metal ion binding"/>
    <property type="evidence" value="ECO:0007669"/>
    <property type="project" value="UniProtKB-KW"/>
</dbReference>
<dbReference type="GO" id="GO:0051287">
    <property type="term" value="F:NAD binding"/>
    <property type="evidence" value="ECO:0007669"/>
    <property type="project" value="InterPro"/>
</dbReference>
<dbReference type="GO" id="GO:0008948">
    <property type="term" value="F:oxaloacetate decarboxylase activity"/>
    <property type="evidence" value="ECO:0007669"/>
    <property type="project" value="RHEA"/>
</dbReference>
<dbReference type="GO" id="GO:0006108">
    <property type="term" value="P:malate metabolic process"/>
    <property type="evidence" value="ECO:0007669"/>
    <property type="project" value="TreeGrafter"/>
</dbReference>
<dbReference type="CDD" id="cd05312">
    <property type="entry name" value="NAD_bind_1_malic_enz"/>
    <property type="match status" value="1"/>
</dbReference>
<dbReference type="FunFam" id="3.40.50.10380:FF:000002">
    <property type="entry name" value="Malic enzyme"/>
    <property type="match status" value="1"/>
</dbReference>
<dbReference type="FunFam" id="3.40.50.720:FF:000067">
    <property type="entry name" value="Malic enzyme"/>
    <property type="match status" value="1"/>
</dbReference>
<dbReference type="Gene3D" id="3.40.50.10380">
    <property type="entry name" value="Malic enzyme, N-terminal domain"/>
    <property type="match status" value="1"/>
</dbReference>
<dbReference type="Gene3D" id="3.40.50.720">
    <property type="entry name" value="NAD(P)-binding Rossmann-like Domain"/>
    <property type="match status" value="1"/>
</dbReference>
<dbReference type="InterPro" id="IPR046346">
    <property type="entry name" value="Aminoacid_DH-like_N_sf"/>
</dbReference>
<dbReference type="InterPro" id="IPR015884">
    <property type="entry name" value="Malic_enzyme_CS"/>
</dbReference>
<dbReference type="InterPro" id="IPR012301">
    <property type="entry name" value="Malic_N_dom"/>
</dbReference>
<dbReference type="InterPro" id="IPR037062">
    <property type="entry name" value="Malic_N_dom_sf"/>
</dbReference>
<dbReference type="InterPro" id="IPR012302">
    <property type="entry name" value="Malic_NAD-bd"/>
</dbReference>
<dbReference type="InterPro" id="IPR001891">
    <property type="entry name" value="Malic_OxRdtase"/>
</dbReference>
<dbReference type="InterPro" id="IPR036291">
    <property type="entry name" value="NAD(P)-bd_dom_sf"/>
</dbReference>
<dbReference type="NCBIfam" id="NF010052">
    <property type="entry name" value="PRK13529.1"/>
    <property type="match status" value="1"/>
</dbReference>
<dbReference type="PANTHER" id="PTHR23406">
    <property type="entry name" value="MALIC ENZYME-RELATED"/>
    <property type="match status" value="1"/>
</dbReference>
<dbReference type="PANTHER" id="PTHR23406:SF76">
    <property type="entry name" value="NADP-DEPENDENT MALIC ENZYME 4, CHLOROPLASTIC"/>
    <property type="match status" value="1"/>
</dbReference>
<dbReference type="Pfam" id="PF00390">
    <property type="entry name" value="malic"/>
    <property type="match status" value="1"/>
</dbReference>
<dbReference type="Pfam" id="PF03949">
    <property type="entry name" value="Malic_M"/>
    <property type="match status" value="1"/>
</dbReference>
<dbReference type="PIRSF" id="PIRSF000106">
    <property type="entry name" value="ME"/>
    <property type="match status" value="1"/>
</dbReference>
<dbReference type="PRINTS" id="PR00072">
    <property type="entry name" value="MALOXRDTASE"/>
</dbReference>
<dbReference type="SMART" id="SM01274">
    <property type="entry name" value="malic"/>
    <property type="match status" value="1"/>
</dbReference>
<dbReference type="SMART" id="SM00919">
    <property type="entry name" value="Malic_M"/>
    <property type="match status" value="1"/>
</dbReference>
<dbReference type="SUPFAM" id="SSF53223">
    <property type="entry name" value="Aminoacid dehydrogenase-like, N-terminal domain"/>
    <property type="match status" value="1"/>
</dbReference>
<dbReference type="SUPFAM" id="SSF51735">
    <property type="entry name" value="NAD(P)-binding Rossmann-fold domains"/>
    <property type="match status" value="1"/>
</dbReference>
<dbReference type="PROSITE" id="PS00331">
    <property type="entry name" value="MALIC_ENZYMES"/>
    <property type="match status" value="1"/>
</dbReference>
<keyword id="KW-0150">Chloroplast</keyword>
<keyword id="KW-0479">Metal-binding</keyword>
<keyword id="KW-0520">NAD</keyword>
<keyword id="KW-0521">NADP</keyword>
<keyword id="KW-0560">Oxidoreductase</keyword>
<keyword id="KW-0934">Plastid</keyword>
<keyword id="KW-0809">Transit peptide</keyword>
<sequence length="648" mass="71470">MISLNSSFLERSSVTGGSRTQSQSLRLSARRPVVTSMLNSNSLPERNVSVSVDSAVRDVNAPVAVEVDRSVGEKPFAAVGGGVEDMYGEDTATEDHYITPWSVSVASGYSLLRDPHHNKGLAFTEKERDAHFLRGLLPPVVVNHDLQVKKMMHNIRQYQVPLQRYQAMMDLQQRNERLFYKLLIENVEELLPIVYTPTVGEACQKYGSIFENSQGLFISLKDKGRILEILKNWPHKKIQVIVVTDGERILGLGDLGCQGMGIPVGKLALYTALGGVRPSACLPITIDVGTNNEKLLNDDEFYIGLKQKRAAGQEYAELMNEFMSAVKQNYGENLLIQFEDFANHNAFDLLEKYRTTHLVFNDDIQGTASVVLGGLISALKLVGGSLADQKFLFLGAGEAGTGIAELIALEISKQTNIPLEESRKKVWLVDSKGLIVRSRLDSLQHFKKPWAHDHEPVNEFLDAIKTIRPTVLIGSSGTGQTFTKEVVETMSSLNEKPIILALSNPTSQSECTAEQAYTWSEGRAIFASGSPFKPVEYNGKLYVSGQANNAYIFPGFGLGLIISGAIRVHDDMLLAASEAPAEQVTQEHFDKGLIFPPFTSIRKISAHIAAKVAAKAYELGLASRLPQPENLVAYAESCMYSPKYRIYR</sequence>
<name>MAOC_FLATR</name>
<organism>
    <name type="scientific">Flaveria trinervia</name>
    <name type="common">Clustered yellowtops</name>
    <name type="synonym">Oedera trinervia</name>
    <dbReference type="NCBI Taxonomy" id="4227"/>
    <lineage>
        <taxon>Eukaryota</taxon>
        <taxon>Viridiplantae</taxon>
        <taxon>Streptophyta</taxon>
        <taxon>Embryophyta</taxon>
        <taxon>Tracheophyta</taxon>
        <taxon>Spermatophyta</taxon>
        <taxon>Magnoliopsida</taxon>
        <taxon>eudicotyledons</taxon>
        <taxon>Gunneridae</taxon>
        <taxon>Pentapetalae</taxon>
        <taxon>asterids</taxon>
        <taxon>campanulids</taxon>
        <taxon>Asterales</taxon>
        <taxon>Asteraceae</taxon>
        <taxon>Asteroideae</taxon>
        <taxon>Heliantheae alliance</taxon>
        <taxon>Tageteae</taxon>
        <taxon>Flaveria</taxon>
    </lineage>
</organism>
<accession>P22178</accession>
<accession>P93140</accession>
<gene>
    <name type="primary">MOD1</name>
    <name type="synonym">MAL</name>
</gene>
<comment type="function">
    <text>The chloroplastic ME isoform decarboxylates malate shuttled from neighboring mesophyll cells. The CO(2) released is then refixed by ribulose-bisphosphate carboxylase. This pathway eliminates the photorespiratory loss of CO(2) that occurs in most plants.</text>
</comment>
<comment type="catalytic activity">
    <reaction>
        <text>(S)-malate + NADP(+) = pyruvate + CO2 + NADPH</text>
        <dbReference type="Rhea" id="RHEA:18253"/>
        <dbReference type="ChEBI" id="CHEBI:15361"/>
        <dbReference type="ChEBI" id="CHEBI:15589"/>
        <dbReference type="ChEBI" id="CHEBI:16526"/>
        <dbReference type="ChEBI" id="CHEBI:57783"/>
        <dbReference type="ChEBI" id="CHEBI:58349"/>
        <dbReference type="EC" id="1.1.1.40"/>
    </reaction>
</comment>
<comment type="catalytic activity">
    <reaction>
        <text>oxaloacetate + H(+) = pyruvate + CO2</text>
        <dbReference type="Rhea" id="RHEA:15641"/>
        <dbReference type="ChEBI" id="CHEBI:15361"/>
        <dbReference type="ChEBI" id="CHEBI:15378"/>
        <dbReference type="ChEBI" id="CHEBI:16452"/>
        <dbReference type="ChEBI" id="CHEBI:16526"/>
        <dbReference type="EC" id="1.1.1.40"/>
    </reaction>
</comment>
<comment type="cofactor">
    <cofactor evidence="1">
        <name>Mg(2+)</name>
        <dbReference type="ChEBI" id="CHEBI:18420"/>
    </cofactor>
    <cofactor evidence="1">
        <name>Mn(2+)</name>
        <dbReference type="ChEBI" id="CHEBI:29035"/>
    </cofactor>
    <text evidence="1">Divalent metal cations. Prefers magnesium or manganese.</text>
</comment>
<comment type="pathway">
    <text>Photosynthesis; C4 acid pathway.</text>
</comment>
<comment type="subunit">
    <text>Homotetramer.</text>
</comment>
<comment type="subcellular location">
    <subcellularLocation>
        <location>Plastid</location>
        <location>Chloroplast</location>
    </subcellularLocation>
</comment>
<comment type="similarity">
    <text evidence="2">Belongs to the malic enzymes family.</text>
</comment>
<feature type="transit peptide" description="Chloroplast">
    <location>
        <begin position="1"/>
        <end position="61" status="uncertain"/>
    </location>
</feature>
<feature type="chain" id="PRO_0000018546" description="NADP-dependent malic enzyme, chloroplastic">
    <location>
        <begin position="62" status="uncertain"/>
        <end position="648"/>
    </location>
</feature>
<feature type="active site" description="Proton donor" evidence="1">
    <location>
        <position position="195"/>
    </location>
</feature>
<feature type="active site" description="Proton acceptor" evidence="1">
    <location>
        <position position="266"/>
    </location>
</feature>
<feature type="binding site" evidence="1">
    <location>
        <position position="248"/>
    </location>
    <ligand>
        <name>NAD(+)</name>
        <dbReference type="ChEBI" id="CHEBI:57540"/>
    </ligand>
</feature>
<feature type="binding site" evidence="1">
    <location>
        <position position="339"/>
    </location>
    <ligand>
        <name>a divalent metal cation</name>
        <dbReference type="ChEBI" id="CHEBI:60240"/>
    </ligand>
</feature>
<feature type="binding site" evidence="1">
    <location>
        <position position="340"/>
    </location>
    <ligand>
        <name>a divalent metal cation</name>
        <dbReference type="ChEBI" id="CHEBI:60240"/>
    </ligand>
</feature>
<feature type="binding site" evidence="1">
    <location>
        <position position="363"/>
    </location>
    <ligand>
        <name>a divalent metal cation</name>
        <dbReference type="ChEBI" id="CHEBI:60240"/>
    </ligand>
</feature>
<feature type="binding site" evidence="1">
    <location>
        <position position="363"/>
    </location>
    <ligand>
        <name>NAD(+)</name>
        <dbReference type="ChEBI" id="CHEBI:57540"/>
    </ligand>
</feature>
<feature type="binding site" evidence="1">
    <location>
        <begin position="392"/>
        <end position="408"/>
    </location>
    <ligand>
        <name>NADP(+)</name>
        <dbReference type="ChEBI" id="CHEBI:58349"/>
    </ligand>
</feature>
<feature type="binding site" evidence="1">
    <location>
        <position position="504"/>
    </location>
    <ligand>
        <name>NAD(+)</name>
        <dbReference type="ChEBI" id="CHEBI:57540"/>
    </ligand>
</feature>
<feature type="site" description="Important for activity" evidence="1">
    <location>
        <position position="363"/>
    </location>
</feature>
<feature type="sequence conflict" description="In Ref. 2; AAB19243." evidence="2" ref="2">
    <original>P</original>
    <variation>L</variation>
    <location>
        <position position="580"/>
    </location>
</feature>
<evidence type="ECO:0000250" key="1"/>
<evidence type="ECO:0000305" key="2"/>
<proteinExistence type="evidence at transcript level"/>
<reference key="1">
    <citation type="journal article" date="1990" name="FEBS Lett.">
        <title>Primary structure of NADP-dependent malic enzyme in the dicotyledonous C4 plant Flaveria trinervia.</title>
        <authorList>
            <person name="Boersch D."/>
            <person name="Westhoff P."/>
        </authorList>
    </citation>
    <scope>NUCLEOTIDE SEQUENCE [MRNA]</scope>
    <source>
        <tissue>Leaf</tissue>
    </source>
</reference>
<reference key="2">
    <citation type="journal article" date="1991" name="Plant Mol. Biol.">
        <title>Isolation and characterization of cDNA clones for NADP-malic enzyme from leaves of Flaveria: transcript abundance distinguishes C3, C3-C4 and C4 photosynthetic types.</title>
        <authorList>
            <person name="Rajeevan M.S."/>
            <person name="Bassett C.L."/>
            <person name="Hughes D.W."/>
        </authorList>
    </citation>
    <scope>NUCLEOTIDE SEQUENCE [MRNA] OF 461-648</scope>
    <source>
        <tissue>Leaf</tissue>
    </source>
</reference>